<gene>
    <name evidence="11" type="primary">cyp51c</name>
    <name type="ORF">AFLA_100590</name>
</gene>
<proteinExistence type="evidence at protein level"/>
<reference key="1">
    <citation type="journal article" date="2015" name="Genome Announc.">
        <title>Genome sequence of Aspergillus flavus NRRL 3357, a strain that causes aflatoxin contamination of food and feed.</title>
        <authorList>
            <person name="Nierman W.C."/>
            <person name="Yu J."/>
            <person name="Fedorova-Abrams N.D."/>
            <person name="Losada L."/>
            <person name="Cleveland T.E."/>
            <person name="Bhatnagar D."/>
            <person name="Bennett J.W."/>
            <person name="Dean R."/>
            <person name="Payne G.A."/>
        </authorList>
    </citation>
    <scope>NUCLEOTIDE SEQUENCE [LARGE SCALE GENOMIC DNA]</scope>
    <source>
        <strain>ATCC 200026 / FGSC A1120 / IAM 13836 / NRRL 3357 / JCM 12722 / SRRC 167</strain>
    </source>
</reference>
<reference key="2">
    <citation type="journal article" date="2012" name="Antimicrob. Agents Chemother.">
        <title>The T788G mutation in the cyp51C gene confers voriconazole resistance in Aspergillus flavus causing aspergillosis.</title>
        <authorList>
            <person name="Liu W."/>
            <person name="Sun Y."/>
            <person name="Chen W."/>
            <person name="Liu W."/>
            <person name="Wan Z."/>
            <person name="Bu D."/>
            <person name="Li R."/>
        </authorList>
    </citation>
    <scope>MUTAGENESIS OF SER-240</scope>
</reference>
<reference key="3">
    <citation type="journal article" date="2015" name="Antimicrob. Agents Chemother.">
        <title>A novel Y319H substitution in CYP51C associated with azole resistance in Aspergillus flavus.</title>
        <authorList>
            <person name="Paul R.A."/>
            <person name="Rudramurthy S.M."/>
            <person name="Meis J.F."/>
            <person name="Mouton J.W."/>
            <person name="Chakrabarti A."/>
        </authorList>
    </citation>
    <scope>MUTAGENESIS OF TYR-319</scope>
    <scope>FUNCTION</scope>
</reference>
<reference key="4">
    <citation type="journal article" date="2018" name="Antimicrob. Agents Chemother.">
        <title>Investigation of multiple resistance mechanisms in voriconazole-resistant Aspergillus flavus clinical isolates from a chest hospital surveillance in Delhi, India.</title>
        <authorList>
            <person name="Sharma C."/>
            <person name="Kumar R."/>
            <person name="Kumar N."/>
            <person name="Masih A."/>
            <person name="Gupta D."/>
            <person name="Chowdhary A."/>
        </authorList>
    </citation>
    <scope>FUNCTION</scope>
    <scope>INDUCTION</scope>
</reference>
<reference key="5">
    <citation type="journal article" date="2019" name="Curr. Med. Mycol.">
        <title>Effect of benomyl and diazinon on acquired azole resistance in Aspergillus flavus and expression of mdr1 and cyp51c genes.</title>
        <authorList>
            <person name="Akbari Dana M."/>
            <person name="Hashemi S.J."/>
            <person name="Daei Ghazvini R."/>
            <person name="Khodavesi S."/>
            <person name="Modiri M."/>
            <person name="Nazemi L."/>
            <person name="Darabian S."/>
            <person name="Rezaie S."/>
        </authorList>
    </citation>
    <scope>INDUCTION</scope>
</reference>
<name>CP51C_ASPFN</name>
<evidence type="ECO:0000250" key="1">
    <source>
        <dbReference type="UniProtKB" id="P10613"/>
    </source>
</evidence>
<evidence type="ECO:0000250" key="2">
    <source>
        <dbReference type="UniProtKB" id="P10614"/>
    </source>
</evidence>
<evidence type="ECO:0000250" key="3">
    <source>
        <dbReference type="UniProtKB" id="Q16850"/>
    </source>
</evidence>
<evidence type="ECO:0000250" key="4">
    <source>
        <dbReference type="UniProtKB" id="Q4WNT5"/>
    </source>
</evidence>
<evidence type="ECO:0000255" key="5"/>
<evidence type="ECO:0000255" key="6">
    <source>
        <dbReference type="PROSITE-ProRule" id="PRU00498"/>
    </source>
</evidence>
<evidence type="ECO:0000269" key="7">
    <source>
    </source>
</evidence>
<evidence type="ECO:0000269" key="8">
    <source>
    </source>
</evidence>
<evidence type="ECO:0000269" key="9">
    <source>
    </source>
</evidence>
<evidence type="ECO:0000269" key="10">
    <source>
    </source>
</evidence>
<evidence type="ECO:0000303" key="11">
    <source>
    </source>
</evidence>
<evidence type="ECO:0000305" key="12"/>
<accession>B8NUK6</accession>
<feature type="chain" id="PRO_0000448856" description="Sterol 14-alpha demethylase">
    <location>
        <begin position="1"/>
        <end position="513"/>
    </location>
</feature>
<feature type="transmembrane region" description="Helical" evidence="5">
    <location>
        <begin position="8"/>
        <end position="28"/>
    </location>
</feature>
<feature type="binding site" description="axial binding residue" evidence="3">
    <location>
        <position position="453"/>
    </location>
    <ligand>
        <name>heme</name>
        <dbReference type="ChEBI" id="CHEBI:30413"/>
    </ligand>
    <ligandPart>
        <name>Fe</name>
        <dbReference type="ChEBI" id="CHEBI:18248"/>
    </ligandPart>
</feature>
<feature type="glycosylation site" description="N-linked (GlcNAc...) asparagine" evidence="6">
    <location>
        <position position="32"/>
    </location>
</feature>
<feature type="glycosylation site" description="N-linked (GlcNAc...) asparagine" evidence="6">
    <location>
        <position position="332"/>
    </location>
</feature>
<feature type="mutagenesis site" description="Leads to resistance to azole compounds." evidence="7">
    <original>S</original>
    <variation>A</variation>
    <location>
        <position position="240"/>
    </location>
</feature>
<feature type="mutagenesis site" description="Leads to resistance to azole compounds." evidence="8">
    <original>Y</original>
    <variation>H</variation>
    <location>
        <position position="319"/>
    </location>
</feature>
<keyword id="KW-0256">Endoplasmic reticulum</keyword>
<keyword id="KW-0325">Glycoprotein</keyword>
<keyword id="KW-0349">Heme</keyword>
<keyword id="KW-0408">Iron</keyword>
<keyword id="KW-0472">Membrane</keyword>
<keyword id="KW-0479">Metal-binding</keyword>
<keyword id="KW-0503">Monooxygenase</keyword>
<keyword id="KW-0560">Oxidoreductase</keyword>
<keyword id="KW-0812">Transmembrane</keyword>
<keyword id="KW-1133">Transmembrane helix</keyword>
<sequence>MSWPRIGAYALLAFVAIMALNVTYQFLFRMLNKTRPPLVFHWIPFIGSTIHYGMDPYGFFFSCREKYGDIFTFILLGRPTTVYLGTQGNEFILNGKLKDVNAEEVYSPLTTPVFGSDVVYDCPNSKLIEQKKFIKFGLSQAALEAHVPLIEKEVEDYLAMSPNFHGTSGEVDIPAAMAEITIFTAGSALQGEEVRSKLTTEFAVLYHDLDKGFTPINFMLPWAPLPHNKKRDAAHARMRSIYIDIINKRRNAGDNVPEKLDMIGNLMQCTYKNGQPLPDKEIAHIMITLLMAGQHSSSSISSWIMLRLASQPAVVEELYQEQLANLERTGPNGSLAPLQYKDFDNLPLHQNVIRETLRLHSSIHSLLRKVKNPLPVPGTPYVIPTSHVLLAAPGVTALSDEYFPNAMAWDPHRWETQAPQENNKDDIVDYGYGAMSKGTSSPYLPFGAGRHRCIGEKFAYLNLAVIVATMVRHLRFSNLDGQTGVPDTDYSSLFSGPMKPARIRWERRAAKSG</sequence>
<comment type="function">
    <text evidence="1 2 4">Sterol 14alpha-demethylase, encoded by cyp51A, cyp51B and cyp51C, that plays a critical role in the third module of ergosterol biosynthesis pathway, being ergosterol the major sterol component in fungal membranes that participates in a variety of functions (By similarity). The third module or late pathway involves the ergosterol synthesis itself through consecutive reactions that mainly occur in the endoplasmic reticulum (ER) membrane (By similarity). In filamentous fungi, during the initial step of this module, lanosterol (lanosta-8,24-dien-3beta-ol) can be metabolized to eburicol (By similarity). Sterol 14alpha-demethylase catalyzes the three-step oxidative removal of the 14alpha-methyl group (C-32) of both these sterols in the form of formate, and converts eburicol and lanosterol to 14-demethyleburicol (4,4,24-trimethylergosta-8,14,24(28)-trienol) and 4,4-dimethyl-5alpha-cholesta-8,14,24-trien-3beta-ol, respectively, which are further metabolized by other enzymes in the pathway to ergosterol (By similarity). Can also use substrates not intrinsic to fungi, such as 24,25-dihydrolanosterol (DHL), producing 4,4'-dimethyl-8,14-cholestadien-3-beta-ol, but at lower rates than the endogenous substrates (By similarity).</text>
</comment>
<comment type="function">
    <text evidence="8 9">As a target of azole drugs, plays a crucial role in azole drug susceptibility.</text>
</comment>
<comment type="catalytic activity">
    <reaction evidence="4">
        <text>a 14alpha-methyl steroid + 3 reduced [NADPH--hemoprotein reductase] + 3 O2 = a Delta(14) steroid + formate + 3 oxidized [NADPH--hemoprotein reductase] + 4 H2O + 4 H(+)</text>
        <dbReference type="Rhea" id="RHEA:54028"/>
        <dbReference type="Rhea" id="RHEA-COMP:11964"/>
        <dbReference type="Rhea" id="RHEA-COMP:11965"/>
        <dbReference type="ChEBI" id="CHEBI:15377"/>
        <dbReference type="ChEBI" id="CHEBI:15378"/>
        <dbReference type="ChEBI" id="CHEBI:15379"/>
        <dbReference type="ChEBI" id="CHEBI:15740"/>
        <dbReference type="ChEBI" id="CHEBI:57618"/>
        <dbReference type="ChEBI" id="CHEBI:58210"/>
        <dbReference type="ChEBI" id="CHEBI:138029"/>
        <dbReference type="ChEBI" id="CHEBI:138031"/>
        <dbReference type="EC" id="1.14.14.154"/>
    </reaction>
    <physiologicalReaction direction="left-to-right" evidence="4">
        <dbReference type="Rhea" id="RHEA:54029"/>
    </physiologicalReaction>
</comment>
<comment type="catalytic activity">
    <reaction evidence="2">
        <text>a 14alpha-methyl steroid + reduced [NADPH--hemoprotein reductase] + O2 = a 14alpha-hydroxymethyl steroid + oxidized [NADPH--hemoprotein reductase] + H2O + H(+)</text>
        <dbReference type="Rhea" id="RHEA:68060"/>
        <dbReference type="Rhea" id="RHEA-COMP:11964"/>
        <dbReference type="Rhea" id="RHEA-COMP:11965"/>
        <dbReference type="ChEBI" id="CHEBI:15377"/>
        <dbReference type="ChEBI" id="CHEBI:15378"/>
        <dbReference type="ChEBI" id="CHEBI:15379"/>
        <dbReference type="ChEBI" id="CHEBI:57618"/>
        <dbReference type="ChEBI" id="CHEBI:58210"/>
        <dbReference type="ChEBI" id="CHEBI:138029"/>
        <dbReference type="ChEBI" id="CHEBI:176901"/>
    </reaction>
    <physiologicalReaction direction="left-to-right" evidence="2">
        <dbReference type="Rhea" id="RHEA:68061"/>
    </physiologicalReaction>
</comment>
<comment type="catalytic activity">
    <reaction evidence="2">
        <text>a 14alpha-hydroxymethyl steroid + reduced [NADPH--hemoprotein reductase] + O2 = a 14alpha-formyl steroid + oxidized [NADPH--hemoprotein reductase] + 2 H2O + H(+)</text>
        <dbReference type="Rhea" id="RHEA:68064"/>
        <dbReference type="Rhea" id="RHEA-COMP:11964"/>
        <dbReference type="Rhea" id="RHEA-COMP:11965"/>
        <dbReference type="ChEBI" id="CHEBI:15377"/>
        <dbReference type="ChEBI" id="CHEBI:15378"/>
        <dbReference type="ChEBI" id="CHEBI:15379"/>
        <dbReference type="ChEBI" id="CHEBI:57618"/>
        <dbReference type="ChEBI" id="CHEBI:58210"/>
        <dbReference type="ChEBI" id="CHEBI:176901"/>
        <dbReference type="ChEBI" id="CHEBI:176902"/>
    </reaction>
    <physiologicalReaction direction="left-to-right" evidence="2">
        <dbReference type="Rhea" id="RHEA:68065"/>
    </physiologicalReaction>
</comment>
<comment type="catalytic activity">
    <reaction evidence="2">
        <text>a 14alpha-formyl steroid + reduced [NADPH--hemoprotein reductase] + O2 = a Delta(14) steroid + formate + oxidized [NADPH--hemoprotein reductase] + H2O + 2 H(+)</text>
        <dbReference type="Rhea" id="RHEA:68068"/>
        <dbReference type="Rhea" id="RHEA-COMP:11964"/>
        <dbReference type="Rhea" id="RHEA-COMP:11965"/>
        <dbReference type="ChEBI" id="CHEBI:15377"/>
        <dbReference type="ChEBI" id="CHEBI:15378"/>
        <dbReference type="ChEBI" id="CHEBI:15379"/>
        <dbReference type="ChEBI" id="CHEBI:15740"/>
        <dbReference type="ChEBI" id="CHEBI:57618"/>
        <dbReference type="ChEBI" id="CHEBI:58210"/>
        <dbReference type="ChEBI" id="CHEBI:138031"/>
        <dbReference type="ChEBI" id="CHEBI:176902"/>
    </reaction>
    <physiologicalReaction direction="left-to-right" evidence="2">
        <dbReference type="Rhea" id="RHEA:68069"/>
    </physiologicalReaction>
</comment>
<comment type="catalytic activity">
    <reaction evidence="4">
        <text>lanosterol + 3 reduced [NADPH--hemoprotein reductase] + 3 O2 = 4,4-dimethyl-5alpha-cholesta-8,14,24-trien-3beta-ol + formate + 3 oxidized [NADPH--hemoprotein reductase] + 4 H2O + 4 H(+)</text>
        <dbReference type="Rhea" id="RHEA:25286"/>
        <dbReference type="Rhea" id="RHEA-COMP:11964"/>
        <dbReference type="Rhea" id="RHEA-COMP:11965"/>
        <dbReference type="ChEBI" id="CHEBI:15377"/>
        <dbReference type="ChEBI" id="CHEBI:15378"/>
        <dbReference type="ChEBI" id="CHEBI:15379"/>
        <dbReference type="ChEBI" id="CHEBI:15740"/>
        <dbReference type="ChEBI" id="CHEBI:16521"/>
        <dbReference type="ChEBI" id="CHEBI:17813"/>
        <dbReference type="ChEBI" id="CHEBI:57618"/>
        <dbReference type="ChEBI" id="CHEBI:58210"/>
        <dbReference type="EC" id="1.14.14.154"/>
    </reaction>
    <physiologicalReaction direction="left-to-right" evidence="4">
        <dbReference type="Rhea" id="RHEA:25287"/>
    </physiologicalReaction>
</comment>
<comment type="catalytic activity">
    <reaction evidence="2">
        <text>lanosterol + reduced [NADPH--hemoprotein reductase] + O2 = 32-hydroxylanosterol + oxidized [NADPH--hemoprotein reductase] + H2O + H(+)</text>
        <dbReference type="Rhea" id="RHEA:75103"/>
        <dbReference type="Rhea" id="RHEA-COMP:11964"/>
        <dbReference type="Rhea" id="RHEA-COMP:11965"/>
        <dbReference type="ChEBI" id="CHEBI:15377"/>
        <dbReference type="ChEBI" id="CHEBI:15378"/>
        <dbReference type="ChEBI" id="CHEBI:15379"/>
        <dbReference type="ChEBI" id="CHEBI:16521"/>
        <dbReference type="ChEBI" id="CHEBI:57618"/>
        <dbReference type="ChEBI" id="CHEBI:58210"/>
        <dbReference type="ChEBI" id="CHEBI:166806"/>
    </reaction>
    <physiologicalReaction direction="left-to-right" evidence="2">
        <dbReference type="Rhea" id="RHEA:75104"/>
    </physiologicalReaction>
</comment>
<comment type="catalytic activity">
    <reaction evidence="2">
        <text>32-hydroxylanosterol + reduced [NADPH--hemoprotein reductase] + O2 = 32-oxolanosterol + oxidized [NADPH--hemoprotein reductase] + 2 H2O + H(+)</text>
        <dbReference type="Rhea" id="RHEA:75107"/>
        <dbReference type="Rhea" id="RHEA-COMP:11964"/>
        <dbReference type="Rhea" id="RHEA-COMP:11965"/>
        <dbReference type="ChEBI" id="CHEBI:15377"/>
        <dbReference type="ChEBI" id="CHEBI:15378"/>
        <dbReference type="ChEBI" id="CHEBI:15379"/>
        <dbReference type="ChEBI" id="CHEBI:57618"/>
        <dbReference type="ChEBI" id="CHEBI:58210"/>
        <dbReference type="ChEBI" id="CHEBI:166681"/>
        <dbReference type="ChEBI" id="CHEBI:166806"/>
    </reaction>
    <physiologicalReaction direction="left-to-right" evidence="2">
        <dbReference type="Rhea" id="RHEA:75108"/>
    </physiologicalReaction>
</comment>
<comment type="catalytic activity">
    <reaction evidence="2">
        <text>32-oxolanosterol + reduced [NADPH--hemoprotein reductase] + O2 = 4,4-dimethyl-5alpha-cholesta-8,14,24-trien-3beta-ol + formate + oxidized [NADPH--hemoprotein reductase] + H2O + 2 H(+)</text>
        <dbReference type="Rhea" id="RHEA:75111"/>
        <dbReference type="Rhea" id="RHEA-COMP:11964"/>
        <dbReference type="Rhea" id="RHEA-COMP:11965"/>
        <dbReference type="ChEBI" id="CHEBI:15377"/>
        <dbReference type="ChEBI" id="CHEBI:15378"/>
        <dbReference type="ChEBI" id="CHEBI:15379"/>
        <dbReference type="ChEBI" id="CHEBI:15740"/>
        <dbReference type="ChEBI" id="CHEBI:17813"/>
        <dbReference type="ChEBI" id="CHEBI:57618"/>
        <dbReference type="ChEBI" id="CHEBI:58210"/>
        <dbReference type="ChEBI" id="CHEBI:166681"/>
    </reaction>
    <physiologicalReaction direction="left-to-right" evidence="2">
        <dbReference type="Rhea" id="RHEA:75112"/>
    </physiologicalReaction>
</comment>
<comment type="catalytic activity">
    <reaction evidence="4">
        <text>eburicol + 3 reduced [NADPH--hemoprotein reductase] + 3 O2 = 14-demethyleburicol + formate + 3 oxidized [NADPH--hemoprotein reductase] + 4 H2O + 4 H(+)</text>
        <dbReference type="Rhea" id="RHEA:75439"/>
        <dbReference type="Rhea" id="RHEA-COMP:11964"/>
        <dbReference type="Rhea" id="RHEA-COMP:11965"/>
        <dbReference type="ChEBI" id="CHEBI:15377"/>
        <dbReference type="ChEBI" id="CHEBI:15378"/>
        <dbReference type="ChEBI" id="CHEBI:15379"/>
        <dbReference type="ChEBI" id="CHEBI:15740"/>
        <dbReference type="ChEBI" id="CHEBI:57618"/>
        <dbReference type="ChEBI" id="CHEBI:58210"/>
        <dbReference type="ChEBI" id="CHEBI:70315"/>
        <dbReference type="ChEBI" id="CHEBI:194330"/>
    </reaction>
    <physiologicalReaction direction="left-to-right" evidence="4">
        <dbReference type="Rhea" id="RHEA:75440"/>
    </physiologicalReaction>
</comment>
<comment type="catalytic activity">
    <reaction evidence="2">
        <text>eburicol + reduced [NADPH--hemoprotein reductase] + O2 = 32-hydroxyeburicol + oxidized [NADPH--hemoprotein reductase] + H2O + H(+)</text>
        <dbReference type="Rhea" id="RHEA:75427"/>
        <dbReference type="Rhea" id="RHEA-COMP:11964"/>
        <dbReference type="Rhea" id="RHEA-COMP:11965"/>
        <dbReference type="ChEBI" id="CHEBI:15377"/>
        <dbReference type="ChEBI" id="CHEBI:15378"/>
        <dbReference type="ChEBI" id="CHEBI:15379"/>
        <dbReference type="ChEBI" id="CHEBI:57618"/>
        <dbReference type="ChEBI" id="CHEBI:58210"/>
        <dbReference type="ChEBI" id="CHEBI:70315"/>
        <dbReference type="ChEBI" id="CHEBI:194328"/>
    </reaction>
    <physiologicalReaction direction="left-to-right" evidence="2">
        <dbReference type="Rhea" id="RHEA:75428"/>
    </physiologicalReaction>
</comment>
<comment type="catalytic activity">
    <reaction evidence="2">
        <text>32-hydroxyeburicol + reduced [NADPH--hemoprotein reductase] + O2 = 32-oxoeburicol + oxidized [NADPH--hemoprotein reductase] + 2 H2O + H(+)</text>
        <dbReference type="Rhea" id="RHEA:75431"/>
        <dbReference type="Rhea" id="RHEA-COMP:11964"/>
        <dbReference type="Rhea" id="RHEA-COMP:11965"/>
        <dbReference type="ChEBI" id="CHEBI:15377"/>
        <dbReference type="ChEBI" id="CHEBI:15378"/>
        <dbReference type="ChEBI" id="CHEBI:15379"/>
        <dbReference type="ChEBI" id="CHEBI:57618"/>
        <dbReference type="ChEBI" id="CHEBI:58210"/>
        <dbReference type="ChEBI" id="CHEBI:194328"/>
        <dbReference type="ChEBI" id="CHEBI:194329"/>
    </reaction>
    <physiologicalReaction direction="left-to-right" evidence="2">
        <dbReference type="Rhea" id="RHEA:75432"/>
    </physiologicalReaction>
</comment>
<comment type="catalytic activity">
    <reaction evidence="2">
        <text>32-oxoeburicol + reduced [NADPH--hemoprotein reductase] + O2 = 14-demethyleburicol + formate + oxidized [NADPH--hemoprotein reductase] + H2O + 2 H(+)</text>
        <dbReference type="Rhea" id="RHEA:75435"/>
        <dbReference type="Rhea" id="RHEA-COMP:11964"/>
        <dbReference type="Rhea" id="RHEA-COMP:11965"/>
        <dbReference type="ChEBI" id="CHEBI:15377"/>
        <dbReference type="ChEBI" id="CHEBI:15378"/>
        <dbReference type="ChEBI" id="CHEBI:15379"/>
        <dbReference type="ChEBI" id="CHEBI:15740"/>
        <dbReference type="ChEBI" id="CHEBI:57618"/>
        <dbReference type="ChEBI" id="CHEBI:58210"/>
        <dbReference type="ChEBI" id="CHEBI:194329"/>
        <dbReference type="ChEBI" id="CHEBI:194330"/>
    </reaction>
    <physiologicalReaction direction="left-to-right" evidence="2">
        <dbReference type="Rhea" id="RHEA:75436"/>
    </physiologicalReaction>
</comment>
<comment type="cofactor">
    <cofactor>
        <name>heme</name>
        <dbReference type="ChEBI" id="CHEBI:30413"/>
    </cofactor>
</comment>
<comment type="pathway">
    <text evidence="4">Steroid biosynthesis; sterol biosynthesis.</text>
</comment>
<comment type="subcellular location">
    <subcellularLocation>
        <location evidence="12">Endoplasmic reticulum membrane</location>
        <topology evidence="5">Single-pass membrane protein</topology>
    </subcellularLocation>
</comment>
<comment type="induction">
    <text evidence="9 10">Over-expressed in azole-resistant clinical isolates (PubMed:29311090). Expression decreases upon exposure to diazinon and increases upon exposure to benomyl (PubMed:31321335).</text>
</comment>
<comment type="miscellaneous">
    <text evidence="7 8">Mutations of Ser-240 or Tyr-319 lead to the resistance to azoles, clinical drugs used to inhibit the activity and kill Aspergillus fumigatus cells during infections.</text>
</comment>
<comment type="similarity">
    <text evidence="12">Belongs to the cytochrome P450 family.</text>
</comment>
<organism>
    <name type="scientific">Aspergillus flavus (strain ATCC 200026 / FGSC A1120 / IAM 13836 / NRRL 3357 / JCM 12722 / SRRC 167)</name>
    <dbReference type="NCBI Taxonomy" id="332952"/>
    <lineage>
        <taxon>Eukaryota</taxon>
        <taxon>Fungi</taxon>
        <taxon>Dikarya</taxon>
        <taxon>Ascomycota</taxon>
        <taxon>Pezizomycotina</taxon>
        <taxon>Eurotiomycetes</taxon>
        <taxon>Eurotiomycetidae</taxon>
        <taxon>Eurotiales</taxon>
        <taxon>Aspergillaceae</taxon>
        <taxon>Aspergillus</taxon>
        <taxon>Aspergillus subgen. Circumdati</taxon>
    </lineage>
</organism>
<dbReference type="EC" id="1.14.14.154" evidence="4"/>
<dbReference type="EMBL" id="EQ963484">
    <property type="protein sequence ID" value="EED46395.1"/>
    <property type="molecule type" value="Genomic_DNA"/>
</dbReference>
<dbReference type="RefSeq" id="XP_002383931.1">
    <property type="nucleotide sequence ID" value="XM_002383890.1"/>
</dbReference>
<dbReference type="SMR" id="B8NUK6"/>
<dbReference type="STRING" id="332952.B8NUK6"/>
<dbReference type="GlyCosmos" id="B8NUK6">
    <property type="glycosylation" value="2 sites, No reported glycans"/>
</dbReference>
<dbReference type="EnsemblFungi" id="EED46395">
    <property type="protein sequence ID" value="EED46395"/>
    <property type="gene ID" value="AFLA_100590"/>
</dbReference>
<dbReference type="VEuPathDB" id="FungiDB:AFLA_010303"/>
<dbReference type="eggNOG" id="KOG0684">
    <property type="taxonomic scope" value="Eukaryota"/>
</dbReference>
<dbReference type="HOGENOM" id="CLU_001570_15_0_1"/>
<dbReference type="OMA" id="NFLMPWA"/>
<dbReference type="UniPathway" id="UPA00766"/>
<dbReference type="GO" id="GO:0005789">
    <property type="term" value="C:endoplasmic reticulum membrane"/>
    <property type="evidence" value="ECO:0007669"/>
    <property type="project" value="UniProtKB-SubCell"/>
</dbReference>
<dbReference type="GO" id="GO:0020037">
    <property type="term" value="F:heme binding"/>
    <property type="evidence" value="ECO:0007669"/>
    <property type="project" value="InterPro"/>
</dbReference>
<dbReference type="GO" id="GO:0005506">
    <property type="term" value="F:iron ion binding"/>
    <property type="evidence" value="ECO:0007669"/>
    <property type="project" value="InterPro"/>
</dbReference>
<dbReference type="GO" id="GO:0008398">
    <property type="term" value="F:sterol 14-demethylase activity"/>
    <property type="evidence" value="ECO:0000304"/>
    <property type="project" value="PHI-base"/>
</dbReference>
<dbReference type="GO" id="GO:0016126">
    <property type="term" value="P:sterol biosynthetic process"/>
    <property type="evidence" value="ECO:0007669"/>
    <property type="project" value="UniProtKB-UniPathway"/>
</dbReference>
<dbReference type="CDD" id="cd11042">
    <property type="entry name" value="CYP51-like"/>
    <property type="match status" value="1"/>
</dbReference>
<dbReference type="FunFam" id="1.10.630.10:FF:000033">
    <property type="entry name" value="14-alpha sterol demethylase"/>
    <property type="match status" value="1"/>
</dbReference>
<dbReference type="Gene3D" id="1.10.630.10">
    <property type="entry name" value="Cytochrome P450"/>
    <property type="match status" value="1"/>
</dbReference>
<dbReference type="InterPro" id="IPR050529">
    <property type="entry name" value="CYP450_sterol_14alpha_dmase"/>
</dbReference>
<dbReference type="InterPro" id="IPR001128">
    <property type="entry name" value="Cyt_P450"/>
</dbReference>
<dbReference type="InterPro" id="IPR017972">
    <property type="entry name" value="Cyt_P450_CS"/>
</dbReference>
<dbReference type="InterPro" id="IPR002403">
    <property type="entry name" value="Cyt_P450_E_grp-IV"/>
</dbReference>
<dbReference type="InterPro" id="IPR036396">
    <property type="entry name" value="Cyt_P450_sf"/>
</dbReference>
<dbReference type="PANTHER" id="PTHR24304:SF2">
    <property type="entry name" value="24-HYDROXYCHOLESTEROL 7-ALPHA-HYDROXYLASE"/>
    <property type="match status" value="1"/>
</dbReference>
<dbReference type="PANTHER" id="PTHR24304">
    <property type="entry name" value="CYTOCHROME P450 FAMILY 7"/>
    <property type="match status" value="1"/>
</dbReference>
<dbReference type="Pfam" id="PF00067">
    <property type="entry name" value="p450"/>
    <property type="match status" value="1"/>
</dbReference>
<dbReference type="PRINTS" id="PR00465">
    <property type="entry name" value="EP450IV"/>
</dbReference>
<dbReference type="PRINTS" id="PR00385">
    <property type="entry name" value="P450"/>
</dbReference>
<dbReference type="SUPFAM" id="SSF48264">
    <property type="entry name" value="Cytochrome P450"/>
    <property type="match status" value="1"/>
</dbReference>
<dbReference type="PROSITE" id="PS00086">
    <property type="entry name" value="CYTOCHROME_P450"/>
    <property type="match status" value="1"/>
</dbReference>
<protein>
    <recommendedName>
        <fullName evidence="11">Sterol 14-alpha demethylase</fullName>
        <ecNumber evidence="4">1.14.14.154</ecNumber>
    </recommendedName>
    <alternativeName>
        <fullName evidence="11">Cytochrome P450 monooxygenase 51C</fullName>
    </alternativeName>
    <alternativeName>
        <fullName evidence="11">Ergosterol biosynthesis protein cyp51C</fullName>
    </alternativeName>
</protein>